<feature type="signal peptide" description="Tat-type signal" evidence="1">
    <location>
        <begin position="1"/>
        <end position="31"/>
    </location>
</feature>
<feature type="chain" id="PRO_1000186376" description="Periplasmic nitrate reductase" evidence="1">
    <location>
        <begin position="32"/>
        <end position="828"/>
    </location>
</feature>
<feature type="domain" description="4Fe-4S Mo/W bis-MGD-type" evidence="1">
    <location>
        <begin position="39"/>
        <end position="95"/>
    </location>
</feature>
<feature type="binding site" evidence="1">
    <location>
        <position position="46"/>
    </location>
    <ligand>
        <name>[4Fe-4S] cluster</name>
        <dbReference type="ChEBI" id="CHEBI:49883"/>
    </ligand>
</feature>
<feature type="binding site" evidence="1">
    <location>
        <position position="49"/>
    </location>
    <ligand>
        <name>[4Fe-4S] cluster</name>
        <dbReference type="ChEBI" id="CHEBI:49883"/>
    </ligand>
</feature>
<feature type="binding site" evidence="1">
    <location>
        <position position="53"/>
    </location>
    <ligand>
        <name>[4Fe-4S] cluster</name>
        <dbReference type="ChEBI" id="CHEBI:49883"/>
    </ligand>
</feature>
<feature type="binding site" evidence="1">
    <location>
        <position position="81"/>
    </location>
    <ligand>
        <name>[4Fe-4S] cluster</name>
        <dbReference type="ChEBI" id="CHEBI:49883"/>
    </ligand>
</feature>
<feature type="binding site" evidence="1">
    <location>
        <position position="83"/>
    </location>
    <ligand>
        <name>Mo-bis(molybdopterin guanine dinucleotide)</name>
        <dbReference type="ChEBI" id="CHEBI:60539"/>
    </ligand>
</feature>
<feature type="binding site" evidence="1">
    <location>
        <position position="150"/>
    </location>
    <ligand>
        <name>Mo-bis(molybdopterin guanine dinucleotide)</name>
        <dbReference type="ChEBI" id="CHEBI:60539"/>
    </ligand>
</feature>
<feature type="binding site" evidence="1">
    <location>
        <position position="175"/>
    </location>
    <ligand>
        <name>Mo-bis(molybdopterin guanine dinucleotide)</name>
        <dbReference type="ChEBI" id="CHEBI:60539"/>
    </ligand>
</feature>
<feature type="binding site" evidence="1">
    <location>
        <position position="179"/>
    </location>
    <ligand>
        <name>Mo-bis(molybdopterin guanine dinucleotide)</name>
        <dbReference type="ChEBI" id="CHEBI:60539"/>
    </ligand>
</feature>
<feature type="binding site" evidence="1">
    <location>
        <begin position="212"/>
        <end position="219"/>
    </location>
    <ligand>
        <name>Mo-bis(molybdopterin guanine dinucleotide)</name>
        <dbReference type="ChEBI" id="CHEBI:60539"/>
    </ligand>
</feature>
<feature type="binding site" evidence="1">
    <location>
        <begin position="243"/>
        <end position="247"/>
    </location>
    <ligand>
        <name>Mo-bis(molybdopterin guanine dinucleotide)</name>
        <dbReference type="ChEBI" id="CHEBI:60539"/>
    </ligand>
</feature>
<feature type="binding site" evidence="1">
    <location>
        <begin position="262"/>
        <end position="264"/>
    </location>
    <ligand>
        <name>Mo-bis(molybdopterin guanine dinucleotide)</name>
        <dbReference type="ChEBI" id="CHEBI:60539"/>
    </ligand>
</feature>
<feature type="binding site" evidence="1">
    <location>
        <position position="372"/>
    </location>
    <ligand>
        <name>Mo-bis(molybdopterin guanine dinucleotide)</name>
        <dbReference type="ChEBI" id="CHEBI:60539"/>
    </ligand>
</feature>
<feature type="binding site" evidence="1">
    <location>
        <position position="376"/>
    </location>
    <ligand>
        <name>Mo-bis(molybdopterin guanine dinucleotide)</name>
        <dbReference type="ChEBI" id="CHEBI:60539"/>
    </ligand>
</feature>
<feature type="binding site" evidence="1">
    <location>
        <position position="482"/>
    </location>
    <ligand>
        <name>Mo-bis(molybdopterin guanine dinucleotide)</name>
        <dbReference type="ChEBI" id="CHEBI:60539"/>
    </ligand>
</feature>
<feature type="binding site" evidence="1">
    <location>
        <begin position="508"/>
        <end position="509"/>
    </location>
    <ligand>
        <name>Mo-bis(molybdopterin guanine dinucleotide)</name>
        <dbReference type="ChEBI" id="CHEBI:60539"/>
    </ligand>
</feature>
<feature type="binding site" evidence="1">
    <location>
        <position position="531"/>
    </location>
    <ligand>
        <name>Mo-bis(molybdopterin guanine dinucleotide)</name>
        <dbReference type="ChEBI" id="CHEBI:60539"/>
    </ligand>
</feature>
<feature type="binding site" evidence="1">
    <location>
        <position position="558"/>
    </location>
    <ligand>
        <name>Mo-bis(molybdopterin guanine dinucleotide)</name>
        <dbReference type="ChEBI" id="CHEBI:60539"/>
    </ligand>
</feature>
<feature type="binding site" evidence="1">
    <location>
        <begin position="718"/>
        <end position="727"/>
    </location>
    <ligand>
        <name>Mo-bis(molybdopterin guanine dinucleotide)</name>
        <dbReference type="ChEBI" id="CHEBI:60539"/>
    </ligand>
</feature>
<feature type="binding site" evidence="1">
    <location>
        <position position="794"/>
    </location>
    <ligand>
        <name>substrate</name>
    </ligand>
</feature>
<feature type="binding site" evidence="1">
    <location>
        <position position="802"/>
    </location>
    <ligand>
        <name>Mo-bis(molybdopterin guanine dinucleotide)</name>
        <dbReference type="ChEBI" id="CHEBI:60539"/>
    </ligand>
</feature>
<feature type="binding site" evidence="1">
    <location>
        <position position="819"/>
    </location>
    <ligand>
        <name>Mo-bis(molybdopterin guanine dinucleotide)</name>
        <dbReference type="ChEBI" id="CHEBI:60539"/>
    </ligand>
</feature>
<name>NAPA_SHIB3</name>
<dbReference type="EC" id="1.9.6.1" evidence="1"/>
<dbReference type="EMBL" id="CP001063">
    <property type="protein sequence ID" value="ACD08569.1"/>
    <property type="molecule type" value="Genomic_DNA"/>
</dbReference>
<dbReference type="RefSeq" id="WP_000778039.1">
    <property type="nucleotide sequence ID" value="NC_010658.1"/>
</dbReference>
<dbReference type="SMR" id="B2TV30"/>
<dbReference type="STRING" id="344609.SbBS512_E0735"/>
<dbReference type="KEGG" id="sbc:SbBS512_E0735"/>
<dbReference type="HOGENOM" id="CLU_000422_13_4_6"/>
<dbReference type="Proteomes" id="UP000001030">
    <property type="component" value="Chromosome"/>
</dbReference>
<dbReference type="GO" id="GO:0016020">
    <property type="term" value="C:membrane"/>
    <property type="evidence" value="ECO:0007669"/>
    <property type="project" value="TreeGrafter"/>
</dbReference>
<dbReference type="GO" id="GO:0009325">
    <property type="term" value="C:nitrate reductase complex"/>
    <property type="evidence" value="ECO:0007669"/>
    <property type="project" value="TreeGrafter"/>
</dbReference>
<dbReference type="GO" id="GO:0042597">
    <property type="term" value="C:periplasmic space"/>
    <property type="evidence" value="ECO:0007669"/>
    <property type="project" value="UniProtKB-SubCell"/>
</dbReference>
<dbReference type="GO" id="GO:0051539">
    <property type="term" value="F:4 iron, 4 sulfur cluster binding"/>
    <property type="evidence" value="ECO:0007669"/>
    <property type="project" value="UniProtKB-KW"/>
</dbReference>
<dbReference type="GO" id="GO:0009055">
    <property type="term" value="F:electron transfer activity"/>
    <property type="evidence" value="ECO:0007669"/>
    <property type="project" value="UniProtKB-UniRule"/>
</dbReference>
<dbReference type="GO" id="GO:0005506">
    <property type="term" value="F:iron ion binding"/>
    <property type="evidence" value="ECO:0007669"/>
    <property type="project" value="UniProtKB-UniRule"/>
</dbReference>
<dbReference type="GO" id="GO:0030151">
    <property type="term" value="F:molybdenum ion binding"/>
    <property type="evidence" value="ECO:0007669"/>
    <property type="project" value="InterPro"/>
</dbReference>
<dbReference type="GO" id="GO:0043546">
    <property type="term" value="F:molybdopterin cofactor binding"/>
    <property type="evidence" value="ECO:0007669"/>
    <property type="project" value="InterPro"/>
</dbReference>
<dbReference type="GO" id="GO:0050140">
    <property type="term" value="F:nitrate reductase (cytochrome) activity"/>
    <property type="evidence" value="ECO:0007669"/>
    <property type="project" value="UniProtKB-EC"/>
</dbReference>
<dbReference type="GO" id="GO:0045333">
    <property type="term" value="P:cellular respiration"/>
    <property type="evidence" value="ECO:0007669"/>
    <property type="project" value="UniProtKB-ARBA"/>
</dbReference>
<dbReference type="GO" id="GO:0006777">
    <property type="term" value="P:Mo-molybdopterin cofactor biosynthetic process"/>
    <property type="evidence" value="ECO:0007669"/>
    <property type="project" value="UniProtKB-UniRule"/>
</dbReference>
<dbReference type="GO" id="GO:0042128">
    <property type="term" value="P:nitrate assimilation"/>
    <property type="evidence" value="ECO:0007669"/>
    <property type="project" value="UniProtKB-UniRule"/>
</dbReference>
<dbReference type="CDD" id="cd02791">
    <property type="entry name" value="MopB_CT_Nitrate-R-NapA-like"/>
    <property type="match status" value="1"/>
</dbReference>
<dbReference type="CDD" id="cd02754">
    <property type="entry name" value="MopB_Nitrate-R-NapA-like"/>
    <property type="match status" value="1"/>
</dbReference>
<dbReference type="FunFam" id="2.40.40.20:FF:000005">
    <property type="entry name" value="Periplasmic nitrate reductase"/>
    <property type="match status" value="1"/>
</dbReference>
<dbReference type="FunFam" id="3.40.228.10:FF:000001">
    <property type="entry name" value="Periplasmic nitrate reductase"/>
    <property type="match status" value="1"/>
</dbReference>
<dbReference type="Gene3D" id="2.40.40.20">
    <property type="match status" value="1"/>
</dbReference>
<dbReference type="Gene3D" id="3.30.200.210">
    <property type="match status" value="1"/>
</dbReference>
<dbReference type="Gene3D" id="3.40.50.740">
    <property type="match status" value="1"/>
</dbReference>
<dbReference type="Gene3D" id="3.40.228.10">
    <property type="entry name" value="Dimethylsulfoxide Reductase, domain 2"/>
    <property type="match status" value="1"/>
</dbReference>
<dbReference type="HAMAP" id="MF_01630">
    <property type="entry name" value="Nitrate_reduct_NapA"/>
    <property type="match status" value="1"/>
</dbReference>
<dbReference type="InterPro" id="IPR009010">
    <property type="entry name" value="Asp_de-COase-like_dom_sf"/>
</dbReference>
<dbReference type="InterPro" id="IPR041957">
    <property type="entry name" value="CT_Nitrate-R-NapA-like"/>
</dbReference>
<dbReference type="InterPro" id="IPR006657">
    <property type="entry name" value="MoPterin_dinucl-bd_dom"/>
</dbReference>
<dbReference type="InterPro" id="IPR006656">
    <property type="entry name" value="Mopterin_OxRdtase"/>
</dbReference>
<dbReference type="InterPro" id="IPR006963">
    <property type="entry name" value="Mopterin_OxRdtase_4Fe-4S_dom"/>
</dbReference>
<dbReference type="InterPro" id="IPR027467">
    <property type="entry name" value="MopterinOxRdtase_cofactor_BS"/>
</dbReference>
<dbReference type="InterPro" id="IPR010051">
    <property type="entry name" value="Periplasm_NO3_reductase_lsu"/>
</dbReference>
<dbReference type="InterPro" id="IPR050123">
    <property type="entry name" value="Prok_molybdopt-oxidoreductase"/>
</dbReference>
<dbReference type="InterPro" id="IPR006311">
    <property type="entry name" value="TAT_signal"/>
</dbReference>
<dbReference type="InterPro" id="IPR019546">
    <property type="entry name" value="TAT_signal_bac_arc"/>
</dbReference>
<dbReference type="NCBIfam" id="TIGR01706">
    <property type="entry name" value="NAPA"/>
    <property type="match status" value="1"/>
</dbReference>
<dbReference type="NCBIfam" id="NF010055">
    <property type="entry name" value="PRK13532.1"/>
    <property type="match status" value="1"/>
</dbReference>
<dbReference type="NCBIfam" id="TIGR01409">
    <property type="entry name" value="TAT_signal_seq"/>
    <property type="match status" value="1"/>
</dbReference>
<dbReference type="PANTHER" id="PTHR43105:SF11">
    <property type="entry name" value="PERIPLASMIC NITRATE REDUCTASE"/>
    <property type="match status" value="1"/>
</dbReference>
<dbReference type="PANTHER" id="PTHR43105">
    <property type="entry name" value="RESPIRATORY NITRATE REDUCTASE"/>
    <property type="match status" value="1"/>
</dbReference>
<dbReference type="Pfam" id="PF04879">
    <property type="entry name" value="Molybdop_Fe4S4"/>
    <property type="match status" value="1"/>
</dbReference>
<dbReference type="Pfam" id="PF00384">
    <property type="entry name" value="Molybdopterin"/>
    <property type="match status" value="1"/>
</dbReference>
<dbReference type="Pfam" id="PF01568">
    <property type="entry name" value="Molydop_binding"/>
    <property type="match status" value="1"/>
</dbReference>
<dbReference type="SMART" id="SM00926">
    <property type="entry name" value="Molybdop_Fe4S4"/>
    <property type="match status" value="1"/>
</dbReference>
<dbReference type="SUPFAM" id="SSF50692">
    <property type="entry name" value="ADC-like"/>
    <property type="match status" value="1"/>
</dbReference>
<dbReference type="SUPFAM" id="SSF53706">
    <property type="entry name" value="Formate dehydrogenase/DMSO reductase, domains 1-3"/>
    <property type="match status" value="1"/>
</dbReference>
<dbReference type="PROSITE" id="PS51669">
    <property type="entry name" value="4FE4S_MOW_BIS_MGD"/>
    <property type="match status" value="1"/>
</dbReference>
<dbReference type="PROSITE" id="PS00551">
    <property type="entry name" value="MOLYBDOPTERIN_PROK_1"/>
    <property type="match status" value="1"/>
</dbReference>
<dbReference type="PROSITE" id="PS51318">
    <property type="entry name" value="TAT"/>
    <property type="match status" value="1"/>
</dbReference>
<keyword id="KW-0004">4Fe-4S</keyword>
<keyword id="KW-0249">Electron transport</keyword>
<keyword id="KW-0408">Iron</keyword>
<keyword id="KW-0411">Iron-sulfur</keyword>
<keyword id="KW-0479">Metal-binding</keyword>
<keyword id="KW-0500">Molybdenum</keyword>
<keyword id="KW-0534">Nitrate assimilation</keyword>
<keyword id="KW-0560">Oxidoreductase</keyword>
<keyword id="KW-0574">Periplasm</keyword>
<keyword id="KW-1185">Reference proteome</keyword>
<keyword id="KW-0732">Signal</keyword>
<keyword id="KW-0813">Transport</keyword>
<organism>
    <name type="scientific">Shigella boydii serotype 18 (strain CDC 3083-94 / BS512)</name>
    <dbReference type="NCBI Taxonomy" id="344609"/>
    <lineage>
        <taxon>Bacteria</taxon>
        <taxon>Pseudomonadati</taxon>
        <taxon>Pseudomonadota</taxon>
        <taxon>Gammaproteobacteria</taxon>
        <taxon>Enterobacterales</taxon>
        <taxon>Enterobacteriaceae</taxon>
        <taxon>Shigella</taxon>
    </lineage>
</organism>
<accession>B2TV30</accession>
<comment type="function">
    <text evidence="1">Catalytic subunit of the periplasmic nitrate reductase complex NapAB. Receives electrons from NapB and catalyzes the reduction of nitrate to nitrite.</text>
</comment>
<comment type="catalytic activity">
    <reaction evidence="1">
        <text>2 Fe(II)-[cytochrome] + nitrate + 2 H(+) = 2 Fe(III)-[cytochrome] + nitrite + H2O</text>
        <dbReference type="Rhea" id="RHEA:12909"/>
        <dbReference type="Rhea" id="RHEA-COMP:11777"/>
        <dbReference type="Rhea" id="RHEA-COMP:11778"/>
        <dbReference type="ChEBI" id="CHEBI:15377"/>
        <dbReference type="ChEBI" id="CHEBI:15378"/>
        <dbReference type="ChEBI" id="CHEBI:16301"/>
        <dbReference type="ChEBI" id="CHEBI:17632"/>
        <dbReference type="ChEBI" id="CHEBI:29033"/>
        <dbReference type="ChEBI" id="CHEBI:29034"/>
        <dbReference type="EC" id="1.9.6.1"/>
    </reaction>
</comment>
<comment type="cofactor">
    <cofactor evidence="1">
        <name>[4Fe-4S] cluster</name>
        <dbReference type="ChEBI" id="CHEBI:49883"/>
    </cofactor>
    <text evidence="1">Binds 1 [4Fe-4S] cluster.</text>
</comment>
<comment type="cofactor">
    <cofactor evidence="1">
        <name>Mo-bis(molybdopterin guanine dinucleotide)</name>
        <dbReference type="ChEBI" id="CHEBI:60539"/>
    </cofactor>
    <text evidence="1">Binds 1 molybdenum-bis(molybdopterin guanine dinucleotide) (Mo-bis-MGD) cofactor per subunit.</text>
</comment>
<comment type="subunit">
    <text evidence="1">Component of the periplasmic nitrate reductase NapAB complex composed of NapA and NapB.</text>
</comment>
<comment type="subcellular location">
    <subcellularLocation>
        <location evidence="1">Periplasm</location>
    </subcellularLocation>
</comment>
<comment type="PTM">
    <text evidence="1">Predicted to be exported by the Tat system. The position of the signal peptide cleavage has not been experimentally proven.</text>
</comment>
<comment type="similarity">
    <text evidence="1">Belongs to the prokaryotic molybdopterin-containing oxidoreductase family. NasA/NapA/NarB subfamily.</text>
</comment>
<proteinExistence type="inferred from homology"/>
<evidence type="ECO:0000255" key="1">
    <source>
        <dbReference type="HAMAP-Rule" id="MF_01630"/>
    </source>
</evidence>
<protein>
    <recommendedName>
        <fullName evidence="1">Periplasmic nitrate reductase</fullName>
        <ecNumber evidence="1">1.9.6.1</ecNumber>
    </recommendedName>
</protein>
<reference key="1">
    <citation type="submission" date="2008-05" db="EMBL/GenBank/DDBJ databases">
        <title>Complete sequence of Shigella boydii serotype 18 strain BS512.</title>
        <authorList>
            <person name="Rasko D.A."/>
            <person name="Rosovitz M."/>
            <person name="Maurelli A.T."/>
            <person name="Myers G."/>
            <person name="Seshadri R."/>
            <person name="Cer R."/>
            <person name="Jiang L."/>
            <person name="Ravel J."/>
            <person name="Sebastian Y."/>
        </authorList>
    </citation>
    <scope>NUCLEOTIDE SEQUENCE [LARGE SCALE GENOMIC DNA]</scope>
    <source>
        <strain>CDC 3083-94 / BS512</strain>
    </source>
</reference>
<sequence length="828" mass="93058">MKLSRRSFMKANAVAAAAAAAGLSVPGVARAVVGQQEAIKWDKAPCRFCGTGCGVLVGTQQGRVVACQGDPDAPVNRGLNCIKGYFLPKIMYGKDRLTQPLLRMKNGKYDKEGEFTLITWDQAFDVMEEKFKTALKEKGPESIGMFGSGQWTIWEGYAASKLFKAGFRSNNIDPNARHCMASAVVGFMRTFGMDEPMGCYDDIEQADAFVLWGANMAEMHPILWSRITNRRLSNQNVTVAVLSTYQHRSFELADNGIIFTPQSDLVILNYIANYIIQNNAINQDFFSKHVNLRKGATDIGYGLRPTHPLEKAAKNPGSDASEPMSFEDYKAFVAEYTLEKTAEMTGVPKDQLEQLAQLYADPNKKVISYWTMGFNQHTRGVWANNLVYNLHLLTGKISQPGCGPFSLTGQPSACGTAREVGTFAHRLPADMVVTNEKHRDICEKKWNIPSGTIPAKIGLHAVAQDRALKDGKLNVYWTMCTNNMQAGPNINEERMPGWRDPRNFIIVSDPYPTVSALAADLILPTAMWVEKEGAYGNAERRTQFWRQQVQAPGEAKSDLWQLVQFSRRFKTEEVWPEDLLAKKPELRGKTLYEVLYATPEVSKFPVSELAEDQLNDESRELGFYLQKGLFEEYAWFGRGHGHDLAPFDDYHKARGLRWPVVNGKETQWRYSEGNDPYVKAGEGYKFYGKPDGKAVIFALPFEPAAEAPDEEYDLWLSTGRVLEHWHTGSMTRRVPELHRAFPEAVLFIHPLDAKARDLRRGDKVKVVSRRGEVISIVETRGRNRPPQGLVYMPFFDAAQLVNKLTLDATDPLSKETDFKKCAVKLEKV</sequence>
<gene>
    <name evidence="1" type="primary">napA</name>
    <name type="ordered locus">SbBS512_E0735</name>
</gene>